<proteinExistence type="inferred from homology"/>
<feature type="chain" id="PRO_1000203380" description="Uracil-DNA glycosylase">
    <location>
        <begin position="1"/>
        <end position="217"/>
    </location>
</feature>
<feature type="active site" description="Proton acceptor" evidence="1">
    <location>
        <position position="62"/>
    </location>
</feature>
<name>UNG_STRS7</name>
<dbReference type="EC" id="3.2.2.27" evidence="1"/>
<dbReference type="EMBL" id="FM204884">
    <property type="protein sequence ID" value="CAW98994.1"/>
    <property type="molecule type" value="Genomic_DNA"/>
</dbReference>
<dbReference type="SMR" id="C0ME57"/>
<dbReference type="KEGG" id="seq:SZO_08200"/>
<dbReference type="PATRIC" id="fig|40041.11.peg.872"/>
<dbReference type="eggNOG" id="COG0692">
    <property type="taxonomic scope" value="Bacteria"/>
</dbReference>
<dbReference type="HOGENOM" id="CLU_032162_3_1_9"/>
<dbReference type="Proteomes" id="UP000001368">
    <property type="component" value="Chromosome"/>
</dbReference>
<dbReference type="GO" id="GO:0005737">
    <property type="term" value="C:cytoplasm"/>
    <property type="evidence" value="ECO:0007669"/>
    <property type="project" value="UniProtKB-SubCell"/>
</dbReference>
<dbReference type="GO" id="GO:0004844">
    <property type="term" value="F:uracil DNA N-glycosylase activity"/>
    <property type="evidence" value="ECO:0007669"/>
    <property type="project" value="UniProtKB-UniRule"/>
</dbReference>
<dbReference type="GO" id="GO:0097510">
    <property type="term" value="P:base-excision repair, AP site formation via deaminated base removal"/>
    <property type="evidence" value="ECO:0007669"/>
    <property type="project" value="TreeGrafter"/>
</dbReference>
<dbReference type="CDD" id="cd10027">
    <property type="entry name" value="UDG-F1-like"/>
    <property type="match status" value="1"/>
</dbReference>
<dbReference type="FunFam" id="3.40.470.10:FF:000008">
    <property type="entry name" value="Uracil-DNA glycosylase"/>
    <property type="match status" value="1"/>
</dbReference>
<dbReference type="Gene3D" id="3.40.470.10">
    <property type="entry name" value="Uracil-DNA glycosylase-like domain"/>
    <property type="match status" value="1"/>
</dbReference>
<dbReference type="HAMAP" id="MF_00148">
    <property type="entry name" value="UDG"/>
    <property type="match status" value="1"/>
</dbReference>
<dbReference type="InterPro" id="IPR002043">
    <property type="entry name" value="UDG_fam1"/>
</dbReference>
<dbReference type="InterPro" id="IPR018085">
    <property type="entry name" value="Ura-DNA_Glyclase_AS"/>
</dbReference>
<dbReference type="InterPro" id="IPR005122">
    <property type="entry name" value="Uracil-DNA_glycosylase-like"/>
</dbReference>
<dbReference type="InterPro" id="IPR036895">
    <property type="entry name" value="Uracil-DNA_glycosylase-like_sf"/>
</dbReference>
<dbReference type="NCBIfam" id="NF003588">
    <property type="entry name" value="PRK05254.1-1"/>
    <property type="match status" value="1"/>
</dbReference>
<dbReference type="NCBIfam" id="NF003589">
    <property type="entry name" value="PRK05254.1-2"/>
    <property type="match status" value="1"/>
</dbReference>
<dbReference type="NCBIfam" id="NF003591">
    <property type="entry name" value="PRK05254.1-4"/>
    <property type="match status" value="1"/>
</dbReference>
<dbReference type="NCBIfam" id="NF003592">
    <property type="entry name" value="PRK05254.1-5"/>
    <property type="match status" value="1"/>
</dbReference>
<dbReference type="NCBIfam" id="TIGR00628">
    <property type="entry name" value="ung"/>
    <property type="match status" value="1"/>
</dbReference>
<dbReference type="PANTHER" id="PTHR11264">
    <property type="entry name" value="URACIL-DNA GLYCOSYLASE"/>
    <property type="match status" value="1"/>
</dbReference>
<dbReference type="PANTHER" id="PTHR11264:SF0">
    <property type="entry name" value="URACIL-DNA GLYCOSYLASE"/>
    <property type="match status" value="1"/>
</dbReference>
<dbReference type="Pfam" id="PF03167">
    <property type="entry name" value="UDG"/>
    <property type="match status" value="1"/>
</dbReference>
<dbReference type="SMART" id="SM00986">
    <property type="entry name" value="UDG"/>
    <property type="match status" value="1"/>
</dbReference>
<dbReference type="SMART" id="SM00987">
    <property type="entry name" value="UreE_C"/>
    <property type="match status" value="1"/>
</dbReference>
<dbReference type="SUPFAM" id="SSF52141">
    <property type="entry name" value="Uracil-DNA glycosylase-like"/>
    <property type="match status" value="1"/>
</dbReference>
<dbReference type="PROSITE" id="PS00130">
    <property type="entry name" value="U_DNA_GLYCOSYLASE"/>
    <property type="match status" value="1"/>
</dbReference>
<organism>
    <name type="scientific">Streptococcus equi subsp. zooepidemicus (strain H70)</name>
    <dbReference type="NCBI Taxonomy" id="553483"/>
    <lineage>
        <taxon>Bacteria</taxon>
        <taxon>Bacillati</taxon>
        <taxon>Bacillota</taxon>
        <taxon>Bacilli</taxon>
        <taxon>Lactobacillales</taxon>
        <taxon>Streptococcaceae</taxon>
        <taxon>Streptococcus</taxon>
    </lineage>
</organism>
<comment type="function">
    <text evidence="1">Excises uracil residues from the DNA which can arise as a result of misincorporation of dUMP residues by DNA polymerase or due to deamination of cytosine.</text>
</comment>
<comment type="catalytic activity">
    <reaction evidence="1">
        <text>Hydrolyzes single-stranded DNA or mismatched double-stranded DNA and polynucleotides, releasing free uracil.</text>
        <dbReference type="EC" id="3.2.2.27"/>
    </reaction>
</comment>
<comment type="subcellular location">
    <subcellularLocation>
        <location evidence="1">Cytoplasm</location>
    </subcellularLocation>
</comment>
<comment type="similarity">
    <text evidence="1">Belongs to the uracil-DNA glycosylase (UDG) superfamily. UNG family.</text>
</comment>
<keyword id="KW-0963">Cytoplasm</keyword>
<keyword id="KW-0227">DNA damage</keyword>
<keyword id="KW-0234">DNA repair</keyword>
<keyword id="KW-0378">Hydrolase</keyword>
<protein>
    <recommendedName>
        <fullName evidence="1">Uracil-DNA glycosylase</fullName>
        <shortName evidence="1">UDG</shortName>
        <ecNumber evidence="1">3.2.2.27</ecNumber>
    </recommendedName>
</protein>
<evidence type="ECO:0000255" key="1">
    <source>
        <dbReference type="HAMAP-Rule" id="MF_00148"/>
    </source>
</evidence>
<accession>C0ME57</accession>
<reference key="1">
    <citation type="journal article" date="2009" name="PLoS Pathog.">
        <title>Genomic evidence for the evolution of Streptococcus equi: host restriction, increased virulence, and genetic exchange with human pathogens.</title>
        <authorList>
            <person name="Holden M.T.G."/>
            <person name="Heather Z."/>
            <person name="Paillot R."/>
            <person name="Steward K.F."/>
            <person name="Webb K."/>
            <person name="Ainslie F."/>
            <person name="Jourdan T."/>
            <person name="Bason N.C."/>
            <person name="Holroyd N.E."/>
            <person name="Mungall K."/>
            <person name="Quail M.A."/>
            <person name="Sanders M."/>
            <person name="Simmonds M."/>
            <person name="Willey D."/>
            <person name="Brooks K."/>
            <person name="Aanensen D.M."/>
            <person name="Spratt B.G."/>
            <person name="Jolley K.A."/>
            <person name="Maiden M.C.J."/>
            <person name="Kehoe M."/>
            <person name="Chanter N."/>
            <person name="Bentley S.D."/>
            <person name="Robinson C."/>
            <person name="Maskell D.J."/>
            <person name="Parkhill J."/>
            <person name="Waller A.S."/>
        </authorList>
    </citation>
    <scope>NUCLEOTIDE SEQUENCE [LARGE SCALE GENOMIC DNA]</scope>
    <source>
        <strain>H70</strain>
    </source>
</reference>
<gene>
    <name evidence="1" type="primary">ung</name>
    <name type="ordered locus">SZO_08200</name>
</gene>
<sequence>MTHSAWHDEIKQVLPKDYYRRVNRFLDEVYATGVVYPPRDNVFKALQVTPLEETRVLILGQDPYHGPLQAQGLSFSVPDSIPAPPSLQNILEELAADIGVRSHHDLSSWAEQGVLLLNACLTVPEGRANGHAGLIWEPFTDAVIKVLNAKDRPVVFVLWGAYARRKKALITNPIHHVIESPHPSPLSAYRGFFGSKPFSRANAILEKEGLGQIDWLR</sequence>